<organism>
    <name type="scientific">Pseudothermotoga lettingae (strain ATCC BAA-301 / DSM 14385 / NBRC 107922 / TMO)</name>
    <name type="common">Thermotoga lettingae</name>
    <dbReference type="NCBI Taxonomy" id="416591"/>
    <lineage>
        <taxon>Bacteria</taxon>
        <taxon>Thermotogati</taxon>
        <taxon>Thermotogota</taxon>
        <taxon>Thermotogae</taxon>
        <taxon>Thermotogales</taxon>
        <taxon>Thermotogaceae</taxon>
        <taxon>Pseudothermotoga</taxon>
    </lineage>
</organism>
<sequence>MQIVATNKKIRDYEILETYEAGIELKGTEVKSLRERNVSFKDAFCRVRDNEIYMLNLHISPYKFANRFNHDPERPRKLLLHKREIKRLIGKLTTTGLTLIPTKIYFNDHGLAKVEIALVRGKKRYDKREEIKRKEINRKIKTYLKYGE</sequence>
<keyword id="KW-0963">Cytoplasm</keyword>
<keyword id="KW-1185">Reference proteome</keyword>
<keyword id="KW-0694">RNA-binding</keyword>
<gene>
    <name evidence="1" type="primary">smpB</name>
    <name type="ordered locus">Tlet_0666</name>
</gene>
<comment type="function">
    <text evidence="1">Required for rescue of stalled ribosomes mediated by trans-translation. Binds to transfer-messenger RNA (tmRNA), required for stable association of tmRNA with ribosomes. tmRNA and SmpB together mimic tRNA shape, replacing the anticodon stem-loop with SmpB. tmRNA is encoded by the ssrA gene; the 2 termini fold to resemble tRNA(Ala) and it encodes a 'tag peptide', a short internal open reading frame. During trans-translation Ala-aminoacylated tmRNA acts like a tRNA, entering the A-site of stalled ribosomes, displacing the stalled mRNA. The ribosome then switches to translate the ORF on the tmRNA; the nascent peptide is terminated with the 'tag peptide' encoded by the tmRNA and targeted for degradation. The ribosome is freed to recommence translation, which seems to be the essential function of trans-translation.</text>
</comment>
<comment type="subcellular location">
    <subcellularLocation>
        <location evidence="1">Cytoplasm</location>
    </subcellularLocation>
    <text evidence="1">The tmRNA-SmpB complex associates with stalled 70S ribosomes.</text>
</comment>
<comment type="similarity">
    <text evidence="1">Belongs to the SmpB family.</text>
</comment>
<protein>
    <recommendedName>
        <fullName evidence="1">SsrA-binding protein</fullName>
    </recommendedName>
    <alternativeName>
        <fullName evidence="1">Small protein B</fullName>
    </alternativeName>
</protein>
<reference key="1">
    <citation type="submission" date="2007-08" db="EMBL/GenBank/DDBJ databases">
        <title>Complete sequence of Thermotoga lettingae TMO.</title>
        <authorList>
            <consortium name="US DOE Joint Genome Institute"/>
            <person name="Copeland A."/>
            <person name="Lucas S."/>
            <person name="Lapidus A."/>
            <person name="Barry K."/>
            <person name="Glavina del Rio T."/>
            <person name="Dalin E."/>
            <person name="Tice H."/>
            <person name="Pitluck S."/>
            <person name="Foster B."/>
            <person name="Bruce D."/>
            <person name="Schmutz J."/>
            <person name="Larimer F."/>
            <person name="Land M."/>
            <person name="Hauser L."/>
            <person name="Kyrpides N."/>
            <person name="Mikhailova N."/>
            <person name="Nelson K."/>
            <person name="Gogarten J.P."/>
            <person name="Noll K."/>
            <person name="Richardson P."/>
        </authorList>
    </citation>
    <scope>NUCLEOTIDE SEQUENCE [LARGE SCALE GENOMIC DNA]</scope>
    <source>
        <strain>ATCC BAA-301 / DSM 14385 / NBRC 107922 / TMO</strain>
    </source>
</reference>
<dbReference type="EMBL" id="CP000812">
    <property type="protein sequence ID" value="ABV33232.1"/>
    <property type="molecule type" value="Genomic_DNA"/>
</dbReference>
<dbReference type="RefSeq" id="WP_012002713.1">
    <property type="nucleotide sequence ID" value="NZ_BSDV01000001.1"/>
</dbReference>
<dbReference type="SMR" id="A8F4Z8"/>
<dbReference type="STRING" id="416591.Tlet_0666"/>
<dbReference type="KEGG" id="tle:Tlet_0666"/>
<dbReference type="eggNOG" id="COG0691">
    <property type="taxonomic scope" value="Bacteria"/>
</dbReference>
<dbReference type="HOGENOM" id="CLU_108953_0_0_0"/>
<dbReference type="OrthoDB" id="9805462at2"/>
<dbReference type="Proteomes" id="UP000002016">
    <property type="component" value="Chromosome"/>
</dbReference>
<dbReference type="GO" id="GO:0005829">
    <property type="term" value="C:cytosol"/>
    <property type="evidence" value="ECO:0007669"/>
    <property type="project" value="TreeGrafter"/>
</dbReference>
<dbReference type="GO" id="GO:0003723">
    <property type="term" value="F:RNA binding"/>
    <property type="evidence" value="ECO:0007669"/>
    <property type="project" value="UniProtKB-UniRule"/>
</dbReference>
<dbReference type="GO" id="GO:0070929">
    <property type="term" value="P:trans-translation"/>
    <property type="evidence" value="ECO:0007669"/>
    <property type="project" value="UniProtKB-UniRule"/>
</dbReference>
<dbReference type="CDD" id="cd09294">
    <property type="entry name" value="SmpB"/>
    <property type="match status" value="1"/>
</dbReference>
<dbReference type="Gene3D" id="2.40.280.10">
    <property type="match status" value="1"/>
</dbReference>
<dbReference type="HAMAP" id="MF_00023">
    <property type="entry name" value="SmpB"/>
    <property type="match status" value="1"/>
</dbReference>
<dbReference type="InterPro" id="IPR023620">
    <property type="entry name" value="SmpB"/>
</dbReference>
<dbReference type="InterPro" id="IPR000037">
    <property type="entry name" value="SsrA-bd_prot"/>
</dbReference>
<dbReference type="InterPro" id="IPR020081">
    <property type="entry name" value="SsrA-bd_prot_CS"/>
</dbReference>
<dbReference type="NCBIfam" id="NF003843">
    <property type="entry name" value="PRK05422.1"/>
    <property type="match status" value="1"/>
</dbReference>
<dbReference type="NCBIfam" id="TIGR00086">
    <property type="entry name" value="smpB"/>
    <property type="match status" value="1"/>
</dbReference>
<dbReference type="PANTHER" id="PTHR30308:SF2">
    <property type="entry name" value="SSRA-BINDING PROTEIN"/>
    <property type="match status" value="1"/>
</dbReference>
<dbReference type="PANTHER" id="PTHR30308">
    <property type="entry name" value="TMRNA-BINDING COMPONENT OF TRANS-TRANSLATION TAGGING COMPLEX"/>
    <property type="match status" value="1"/>
</dbReference>
<dbReference type="Pfam" id="PF01668">
    <property type="entry name" value="SmpB"/>
    <property type="match status" value="1"/>
</dbReference>
<dbReference type="SUPFAM" id="SSF74982">
    <property type="entry name" value="Small protein B (SmpB)"/>
    <property type="match status" value="1"/>
</dbReference>
<dbReference type="PROSITE" id="PS01317">
    <property type="entry name" value="SSRP"/>
    <property type="match status" value="1"/>
</dbReference>
<feature type="chain" id="PRO_0000331109" description="SsrA-binding protein">
    <location>
        <begin position="1"/>
        <end position="148"/>
    </location>
</feature>
<accession>A8F4Z8</accession>
<proteinExistence type="inferred from homology"/>
<name>SSRP_PSELT</name>
<evidence type="ECO:0000255" key="1">
    <source>
        <dbReference type="HAMAP-Rule" id="MF_00023"/>
    </source>
</evidence>